<comment type="function">
    <text evidence="1">Key enzyme in the regulation of glycerol uptake and metabolism. Catalyzes the phosphorylation of glycerol to yield sn-glycerol 3-phosphate.</text>
</comment>
<comment type="catalytic activity">
    <reaction evidence="1">
        <text>glycerol + ATP = sn-glycerol 3-phosphate + ADP + H(+)</text>
        <dbReference type="Rhea" id="RHEA:21644"/>
        <dbReference type="ChEBI" id="CHEBI:15378"/>
        <dbReference type="ChEBI" id="CHEBI:17754"/>
        <dbReference type="ChEBI" id="CHEBI:30616"/>
        <dbReference type="ChEBI" id="CHEBI:57597"/>
        <dbReference type="ChEBI" id="CHEBI:456216"/>
        <dbReference type="EC" id="2.7.1.30"/>
    </reaction>
</comment>
<comment type="activity regulation">
    <text evidence="1">Inhibited by fructose 1,6-bisphosphate (FBP).</text>
</comment>
<comment type="pathway">
    <text evidence="1">Polyol metabolism; glycerol degradation via glycerol kinase pathway; sn-glycerol 3-phosphate from glycerol: step 1/1.</text>
</comment>
<comment type="similarity">
    <text evidence="1">Belongs to the FGGY kinase family.</text>
</comment>
<reference key="1">
    <citation type="journal article" date="2001" name="Proc. Natl. Acad. Sci. U.S.A.">
        <title>Genome sequence of an industrial microorganism Streptomyces avermitilis: deducing the ability of producing secondary metabolites.</title>
        <authorList>
            <person name="Omura S."/>
            <person name="Ikeda H."/>
            <person name="Ishikawa J."/>
            <person name="Hanamoto A."/>
            <person name="Takahashi C."/>
            <person name="Shinose M."/>
            <person name="Takahashi Y."/>
            <person name="Horikawa H."/>
            <person name="Nakazawa H."/>
            <person name="Osonoe T."/>
            <person name="Kikuchi H."/>
            <person name="Shiba T."/>
            <person name="Sakaki Y."/>
            <person name="Hattori M."/>
        </authorList>
    </citation>
    <scope>NUCLEOTIDE SEQUENCE [LARGE SCALE GENOMIC DNA]</scope>
    <source>
        <strain>ATCC 31267 / DSM 46492 / JCM 5070 / NBRC 14893 / NCIMB 12804 / NRRL 8165 / MA-4680</strain>
    </source>
</reference>
<reference key="2">
    <citation type="journal article" date="2003" name="Nat. Biotechnol.">
        <title>Complete genome sequence and comparative analysis of the industrial microorganism Streptomyces avermitilis.</title>
        <authorList>
            <person name="Ikeda H."/>
            <person name="Ishikawa J."/>
            <person name="Hanamoto A."/>
            <person name="Shinose M."/>
            <person name="Kikuchi H."/>
            <person name="Shiba T."/>
            <person name="Sakaki Y."/>
            <person name="Hattori M."/>
            <person name="Omura S."/>
        </authorList>
    </citation>
    <scope>NUCLEOTIDE SEQUENCE [LARGE SCALE GENOMIC DNA]</scope>
    <source>
        <strain>ATCC 31267 / DSM 46492 / JCM 5070 / NBRC 14893 / NCIMB 12804 / NRRL 8165 / MA-4680</strain>
    </source>
</reference>
<organism>
    <name type="scientific">Streptomyces avermitilis (strain ATCC 31267 / DSM 46492 / JCM 5070 / NBRC 14893 / NCIMB 12804 / NRRL 8165 / MA-4680)</name>
    <dbReference type="NCBI Taxonomy" id="227882"/>
    <lineage>
        <taxon>Bacteria</taxon>
        <taxon>Bacillati</taxon>
        <taxon>Actinomycetota</taxon>
        <taxon>Actinomycetes</taxon>
        <taxon>Kitasatosporales</taxon>
        <taxon>Streptomycetaceae</taxon>
        <taxon>Streptomyces</taxon>
    </lineage>
</organism>
<dbReference type="EC" id="2.7.1.30" evidence="1"/>
<dbReference type="EMBL" id="BA000030">
    <property type="protein sequence ID" value="BAC74912.1"/>
    <property type="molecule type" value="Genomic_DNA"/>
</dbReference>
<dbReference type="SMR" id="Q826J2"/>
<dbReference type="GeneID" id="41544272"/>
<dbReference type="KEGG" id="sma:SAVERM_7201"/>
<dbReference type="eggNOG" id="COG0554">
    <property type="taxonomic scope" value="Bacteria"/>
</dbReference>
<dbReference type="HOGENOM" id="CLU_009281_2_3_11"/>
<dbReference type="OrthoDB" id="9805576at2"/>
<dbReference type="UniPathway" id="UPA00618">
    <property type="reaction ID" value="UER00672"/>
</dbReference>
<dbReference type="Proteomes" id="UP000000428">
    <property type="component" value="Chromosome"/>
</dbReference>
<dbReference type="GO" id="GO:0005829">
    <property type="term" value="C:cytosol"/>
    <property type="evidence" value="ECO:0007669"/>
    <property type="project" value="TreeGrafter"/>
</dbReference>
<dbReference type="GO" id="GO:0005524">
    <property type="term" value="F:ATP binding"/>
    <property type="evidence" value="ECO:0007669"/>
    <property type="project" value="UniProtKB-UniRule"/>
</dbReference>
<dbReference type="GO" id="GO:0004370">
    <property type="term" value="F:glycerol kinase activity"/>
    <property type="evidence" value="ECO:0000250"/>
    <property type="project" value="UniProtKB"/>
</dbReference>
<dbReference type="GO" id="GO:0019563">
    <property type="term" value="P:glycerol catabolic process"/>
    <property type="evidence" value="ECO:0007669"/>
    <property type="project" value="UniProtKB-UniRule"/>
</dbReference>
<dbReference type="GO" id="GO:0006071">
    <property type="term" value="P:glycerol metabolic process"/>
    <property type="evidence" value="ECO:0000250"/>
    <property type="project" value="UniProtKB"/>
</dbReference>
<dbReference type="GO" id="GO:0006072">
    <property type="term" value="P:glycerol-3-phosphate metabolic process"/>
    <property type="evidence" value="ECO:0007669"/>
    <property type="project" value="InterPro"/>
</dbReference>
<dbReference type="CDD" id="cd07769">
    <property type="entry name" value="ASKHA_NBD_FGGY_GK"/>
    <property type="match status" value="1"/>
</dbReference>
<dbReference type="FunFam" id="3.30.420.40:FF:000007">
    <property type="entry name" value="Glycerol kinase"/>
    <property type="match status" value="1"/>
</dbReference>
<dbReference type="FunFam" id="3.30.420.40:FF:000008">
    <property type="entry name" value="Glycerol kinase"/>
    <property type="match status" value="1"/>
</dbReference>
<dbReference type="Gene3D" id="3.30.420.40">
    <property type="match status" value="2"/>
</dbReference>
<dbReference type="HAMAP" id="MF_00186">
    <property type="entry name" value="Glycerol_kin"/>
    <property type="match status" value="1"/>
</dbReference>
<dbReference type="InterPro" id="IPR043129">
    <property type="entry name" value="ATPase_NBD"/>
</dbReference>
<dbReference type="InterPro" id="IPR000577">
    <property type="entry name" value="Carb_kinase_FGGY"/>
</dbReference>
<dbReference type="InterPro" id="IPR018483">
    <property type="entry name" value="Carb_kinase_FGGY_CS"/>
</dbReference>
<dbReference type="InterPro" id="IPR018485">
    <property type="entry name" value="FGGY_C"/>
</dbReference>
<dbReference type="InterPro" id="IPR018484">
    <property type="entry name" value="FGGY_N"/>
</dbReference>
<dbReference type="InterPro" id="IPR005999">
    <property type="entry name" value="Glycerol_kin"/>
</dbReference>
<dbReference type="NCBIfam" id="TIGR01311">
    <property type="entry name" value="glycerol_kin"/>
    <property type="match status" value="1"/>
</dbReference>
<dbReference type="NCBIfam" id="NF000756">
    <property type="entry name" value="PRK00047.1"/>
    <property type="match status" value="1"/>
</dbReference>
<dbReference type="PANTHER" id="PTHR10196:SF69">
    <property type="entry name" value="GLYCEROL KINASE"/>
    <property type="match status" value="1"/>
</dbReference>
<dbReference type="PANTHER" id="PTHR10196">
    <property type="entry name" value="SUGAR KINASE"/>
    <property type="match status" value="1"/>
</dbReference>
<dbReference type="Pfam" id="PF02782">
    <property type="entry name" value="FGGY_C"/>
    <property type="match status" value="1"/>
</dbReference>
<dbReference type="Pfam" id="PF00370">
    <property type="entry name" value="FGGY_N"/>
    <property type="match status" value="1"/>
</dbReference>
<dbReference type="PIRSF" id="PIRSF000538">
    <property type="entry name" value="GlpK"/>
    <property type="match status" value="1"/>
</dbReference>
<dbReference type="SUPFAM" id="SSF53067">
    <property type="entry name" value="Actin-like ATPase domain"/>
    <property type="match status" value="2"/>
</dbReference>
<dbReference type="PROSITE" id="PS00933">
    <property type="entry name" value="FGGY_KINASES_1"/>
    <property type="match status" value="1"/>
</dbReference>
<dbReference type="PROSITE" id="PS00445">
    <property type="entry name" value="FGGY_KINASES_2"/>
    <property type="match status" value="1"/>
</dbReference>
<sequence length="505" mass="55291">MADFVGAVDQGTTSTRFMIFDHAGNEVAKHQLEHAQILPRSGWVEHDPVEIWERTNSVIQNALRHGNLSPDDLAAIGITNQRETTVVWDPRNGRPYYNAIVWQDTRTDSIAAALERSGQGDVIRRKAGLPPATYFSGGKIQWILENVDGVREAAEQGHAVFGNTDCWVLWNLTGGPDGGIHATDVTNASRTMLMDLETLDWDDELLGLFDIPRSMLPTINPSSHPEAYGQTRTSRPLRAAIPIAGVLGDQQAATVGQVCYAPGEAKNTYGTGNFLVLNTGTELVRSQHGLLTTVAYQFGDSPAIYALEGSIAVTGSAVQWLRDQMKIIKSAAESETLARTVEDNGGIYFVPAFSGLFAPYWRSDARGAIVGLARYHDNGHLARATLEAICYQSRDVVEAMEQDSGVHLDVLKVDGGVTANDLCMQIQADILGVPVSRPVVAETTALGAAYAAGLATGFWQDTDELRTHWQESKRWEPQWSEDRRAEGYAGWKKAVERTLDWSKVE</sequence>
<gene>
    <name evidence="1" type="primary">glpK3</name>
    <name type="ordered locus">SAV_7201</name>
</gene>
<accession>Q826J2</accession>
<name>GLPK3_STRAW</name>
<protein>
    <recommendedName>
        <fullName evidence="1">Glycerol kinase 3</fullName>
        <ecNumber evidence="1">2.7.1.30</ecNumber>
    </recommendedName>
    <alternativeName>
        <fullName evidence="1">ATP:glycerol 3-phosphotransferase 3</fullName>
    </alternativeName>
    <alternativeName>
        <fullName evidence="1">Glycerokinase 3</fullName>
        <shortName evidence="1">GK 3</shortName>
    </alternativeName>
</protein>
<keyword id="KW-0067">ATP-binding</keyword>
<keyword id="KW-0319">Glycerol metabolism</keyword>
<keyword id="KW-0418">Kinase</keyword>
<keyword id="KW-0547">Nucleotide-binding</keyword>
<keyword id="KW-1185">Reference proteome</keyword>
<keyword id="KW-0808">Transferase</keyword>
<feature type="chain" id="PRO_0000059501" description="Glycerol kinase 3">
    <location>
        <begin position="1"/>
        <end position="505"/>
    </location>
</feature>
<feature type="binding site" evidence="1">
    <location>
        <position position="12"/>
    </location>
    <ligand>
        <name>ADP</name>
        <dbReference type="ChEBI" id="CHEBI:456216"/>
    </ligand>
</feature>
<feature type="binding site" evidence="1">
    <location>
        <position position="12"/>
    </location>
    <ligand>
        <name>ATP</name>
        <dbReference type="ChEBI" id="CHEBI:30616"/>
    </ligand>
</feature>
<feature type="binding site" evidence="1">
    <location>
        <position position="12"/>
    </location>
    <ligand>
        <name>sn-glycerol 3-phosphate</name>
        <dbReference type="ChEBI" id="CHEBI:57597"/>
    </ligand>
</feature>
<feature type="binding site" evidence="1">
    <location>
        <position position="13"/>
    </location>
    <ligand>
        <name>ATP</name>
        <dbReference type="ChEBI" id="CHEBI:30616"/>
    </ligand>
</feature>
<feature type="binding site" evidence="1">
    <location>
        <position position="14"/>
    </location>
    <ligand>
        <name>ATP</name>
        <dbReference type="ChEBI" id="CHEBI:30616"/>
    </ligand>
</feature>
<feature type="binding site" evidence="1">
    <location>
        <position position="16"/>
    </location>
    <ligand>
        <name>ADP</name>
        <dbReference type="ChEBI" id="CHEBI:456216"/>
    </ligand>
</feature>
<feature type="binding site" evidence="1">
    <location>
        <position position="82"/>
    </location>
    <ligand>
        <name>glycerol</name>
        <dbReference type="ChEBI" id="CHEBI:17754"/>
    </ligand>
</feature>
<feature type="binding site" evidence="1">
    <location>
        <position position="82"/>
    </location>
    <ligand>
        <name>sn-glycerol 3-phosphate</name>
        <dbReference type="ChEBI" id="CHEBI:57597"/>
    </ligand>
</feature>
<feature type="binding site" evidence="1">
    <location>
        <position position="83"/>
    </location>
    <ligand>
        <name>glycerol</name>
        <dbReference type="ChEBI" id="CHEBI:17754"/>
    </ligand>
</feature>
<feature type="binding site" evidence="1">
    <location>
        <position position="83"/>
    </location>
    <ligand>
        <name>sn-glycerol 3-phosphate</name>
        <dbReference type="ChEBI" id="CHEBI:57597"/>
    </ligand>
</feature>
<feature type="binding site" evidence="1">
    <location>
        <position position="134"/>
    </location>
    <ligand>
        <name>glycerol</name>
        <dbReference type="ChEBI" id="CHEBI:17754"/>
    </ligand>
</feature>
<feature type="binding site" evidence="1">
    <location>
        <position position="134"/>
    </location>
    <ligand>
        <name>sn-glycerol 3-phosphate</name>
        <dbReference type="ChEBI" id="CHEBI:57597"/>
    </ligand>
</feature>
<feature type="binding site" evidence="1">
    <location>
        <position position="249"/>
    </location>
    <ligand>
        <name>glycerol</name>
        <dbReference type="ChEBI" id="CHEBI:17754"/>
    </ligand>
</feature>
<feature type="binding site" evidence="1">
    <location>
        <position position="249"/>
    </location>
    <ligand>
        <name>sn-glycerol 3-phosphate</name>
        <dbReference type="ChEBI" id="CHEBI:57597"/>
    </ligand>
</feature>
<feature type="binding site" evidence="1">
    <location>
        <position position="250"/>
    </location>
    <ligand>
        <name>glycerol</name>
        <dbReference type="ChEBI" id="CHEBI:17754"/>
    </ligand>
</feature>
<feature type="binding site" evidence="1">
    <location>
        <position position="271"/>
    </location>
    <ligand>
        <name>ADP</name>
        <dbReference type="ChEBI" id="CHEBI:456216"/>
    </ligand>
</feature>
<feature type="binding site" evidence="1">
    <location>
        <position position="271"/>
    </location>
    <ligand>
        <name>ATP</name>
        <dbReference type="ChEBI" id="CHEBI:30616"/>
    </ligand>
</feature>
<feature type="binding site" evidence="1">
    <location>
        <position position="315"/>
    </location>
    <ligand>
        <name>ADP</name>
        <dbReference type="ChEBI" id="CHEBI:456216"/>
    </ligand>
</feature>
<feature type="binding site" evidence="1">
    <location>
        <position position="315"/>
    </location>
    <ligand>
        <name>ATP</name>
        <dbReference type="ChEBI" id="CHEBI:30616"/>
    </ligand>
</feature>
<feature type="binding site" evidence="1">
    <location>
        <position position="319"/>
    </location>
    <ligand>
        <name>ATP</name>
        <dbReference type="ChEBI" id="CHEBI:30616"/>
    </ligand>
</feature>
<feature type="binding site" evidence="1">
    <location>
        <position position="416"/>
    </location>
    <ligand>
        <name>ADP</name>
        <dbReference type="ChEBI" id="CHEBI:456216"/>
    </ligand>
</feature>
<feature type="binding site" evidence="1">
    <location>
        <position position="416"/>
    </location>
    <ligand>
        <name>ATP</name>
        <dbReference type="ChEBI" id="CHEBI:30616"/>
    </ligand>
</feature>
<feature type="binding site" evidence="1">
    <location>
        <position position="420"/>
    </location>
    <ligand>
        <name>ADP</name>
        <dbReference type="ChEBI" id="CHEBI:456216"/>
    </ligand>
</feature>
<proteinExistence type="inferred from homology"/>
<evidence type="ECO:0000255" key="1">
    <source>
        <dbReference type="HAMAP-Rule" id="MF_00186"/>
    </source>
</evidence>